<evidence type="ECO:0000255" key="1">
    <source>
        <dbReference type="HAMAP-Rule" id="MF_00465"/>
    </source>
</evidence>
<reference key="1">
    <citation type="journal article" date="2009" name="Proc. Natl. Acad. Sci. U.S.A.">
        <title>Hamiltonella defensa, genome evolution of protective bacterial endosymbiont from pathogenic ancestors.</title>
        <authorList>
            <person name="Degnan P.H."/>
            <person name="Yu Y."/>
            <person name="Sisneros N."/>
            <person name="Wing R.A."/>
            <person name="Moran N.A."/>
        </authorList>
    </citation>
    <scope>NUCLEOTIDE SEQUENCE [LARGE SCALE GENOMIC DNA]</scope>
    <source>
        <strain>5AT</strain>
    </source>
</reference>
<keyword id="KW-0068">Autocatalytic cleavage</keyword>
<keyword id="KW-0210">Decarboxylase</keyword>
<keyword id="KW-0456">Lyase</keyword>
<keyword id="KW-0620">Polyamine biosynthesis</keyword>
<keyword id="KW-0670">Pyruvate</keyword>
<keyword id="KW-0949">S-adenosyl-L-methionine</keyword>
<keyword id="KW-0704">Schiff base</keyword>
<keyword id="KW-0745">Spermidine biosynthesis</keyword>
<keyword id="KW-0865">Zymogen</keyword>
<organism>
    <name type="scientific">Hamiltonella defensa subsp. Acyrthosiphon pisum (strain 5AT)</name>
    <dbReference type="NCBI Taxonomy" id="572265"/>
    <lineage>
        <taxon>Bacteria</taxon>
        <taxon>Pseudomonadati</taxon>
        <taxon>Pseudomonadota</taxon>
        <taxon>Gammaproteobacteria</taxon>
        <taxon>Enterobacterales</taxon>
        <taxon>Enterobacteriaceae</taxon>
        <taxon>aphid secondary symbionts</taxon>
        <taxon>Candidatus Hamiltonella</taxon>
    </lineage>
</organism>
<dbReference type="EC" id="4.1.1.50" evidence="1"/>
<dbReference type="EMBL" id="CP001277">
    <property type="protein sequence ID" value="ACQ67265.1"/>
    <property type="molecule type" value="Genomic_DNA"/>
</dbReference>
<dbReference type="RefSeq" id="WP_012738222.1">
    <property type="nucleotide sequence ID" value="NC_012751.1"/>
</dbReference>
<dbReference type="SMR" id="C4K3X2"/>
<dbReference type="STRING" id="572265.HDEF_0511"/>
<dbReference type="GeneID" id="66260396"/>
<dbReference type="KEGG" id="hde:HDEF_0511"/>
<dbReference type="eggNOG" id="COG1586">
    <property type="taxonomic scope" value="Bacteria"/>
</dbReference>
<dbReference type="HOGENOM" id="CLU_092007_0_0_6"/>
<dbReference type="UniPathway" id="UPA00331">
    <property type="reaction ID" value="UER00451"/>
</dbReference>
<dbReference type="Proteomes" id="UP000002334">
    <property type="component" value="Chromosome"/>
</dbReference>
<dbReference type="GO" id="GO:0005829">
    <property type="term" value="C:cytosol"/>
    <property type="evidence" value="ECO:0007669"/>
    <property type="project" value="TreeGrafter"/>
</dbReference>
<dbReference type="GO" id="GO:0004014">
    <property type="term" value="F:adenosylmethionine decarboxylase activity"/>
    <property type="evidence" value="ECO:0007669"/>
    <property type="project" value="UniProtKB-UniRule"/>
</dbReference>
<dbReference type="GO" id="GO:0008295">
    <property type="term" value="P:spermidine biosynthetic process"/>
    <property type="evidence" value="ECO:0007669"/>
    <property type="project" value="UniProtKB-UniRule"/>
</dbReference>
<dbReference type="FunFam" id="3.60.90.10:FF:000001">
    <property type="entry name" value="S-adenosylmethionine decarboxylase proenzyme"/>
    <property type="match status" value="1"/>
</dbReference>
<dbReference type="Gene3D" id="3.60.90.10">
    <property type="entry name" value="S-adenosylmethionine decarboxylase"/>
    <property type="match status" value="1"/>
</dbReference>
<dbReference type="HAMAP" id="MF_00465">
    <property type="entry name" value="AdoMetDC_2"/>
    <property type="match status" value="1"/>
</dbReference>
<dbReference type="InterPro" id="IPR003826">
    <property type="entry name" value="AdoMetDC_fam_prok"/>
</dbReference>
<dbReference type="InterPro" id="IPR009165">
    <property type="entry name" value="S-AdoMet_deCO2ase_bac"/>
</dbReference>
<dbReference type="InterPro" id="IPR016067">
    <property type="entry name" value="S-AdoMet_deCO2ase_core"/>
</dbReference>
<dbReference type="NCBIfam" id="TIGR03331">
    <property type="entry name" value="SAM_DCase_Eco"/>
    <property type="match status" value="1"/>
</dbReference>
<dbReference type="PANTHER" id="PTHR33866">
    <property type="entry name" value="S-ADENOSYLMETHIONINE DECARBOXYLASE PROENZYME"/>
    <property type="match status" value="1"/>
</dbReference>
<dbReference type="PANTHER" id="PTHR33866:SF1">
    <property type="entry name" value="S-ADENOSYLMETHIONINE DECARBOXYLASE PROENZYME"/>
    <property type="match status" value="1"/>
</dbReference>
<dbReference type="Pfam" id="PF02675">
    <property type="entry name" value="AdoMet_dc"/>
    <property type="match status" value="1"/>
</dbReference>
<dbReference type="PIRSF" id="PIRSF001356">
    <property type="entry name" value="SAM_decarboxylas"/>
    <property type="match status" value="1"/>
</dbReference>
<dbReference type="SUPFAM" id="SSF56276">
    <property type="entry name" value="S-adenosylmethionine decarboxylase"/>
    <property type="match status" value="1"/>
</dbReference>
<sequence length="264" mass="30503">MNKLKLHGFNNLTKSLGFCIYDICYAQTFADRDGYIAYIDDEYNADRLTEILRETCSIIGANILNIARQDYNPQGASVTILISEEAIDPRDVDTSEHPGPLPDSIVAHLDKSHICVHTYPESHPTEGLCTFRADIEVSTCGIISPLNALNYLIHQLESDIVTIDYRVRGFTRDVNGVKHYIDHQINSIQNFMCKDIQSLYHMMDVNVYQENIFHTKMMLKDFDLKHYLFNSHPEQLSVQEKDLITKRLYKEMQEIYYGRNVVEV</sequence>
<protein>
    <recommendedName>
        <fullName evidence="1">S-adenosylmethionine decarboxylase proenzyme</fullName>
        <shortName evidence="1">AdoMetDC</shortName>
        <shortName evidence="1">SAMDC</shortName>
        <ecNumber evidence="1">4.1.1.50</ecNumber>
    </recommendedName>
    <component>
        <recommendedName>
            <fullName evidence="1">S-adenosylmethionine decarboxylase beta chain</fullName>
        </recommendedName>
    </component>
    <component>
        <recommendedName>
            <fullName evidence="1">S-adenosylmethionine decarboxylase alpha chain</fullName>
        </recommendedName>
    </component>
</protein>
<feature type="chain" id="PRO_1000206326" description="S-adenosylmethionine decarboxylase beta chain" evidence="1">
    <location>
        <begin position="1"/>
        <end position="111"/>
    </location>
</feature>
<feature type="chain" id="PRO_1000206327" description="S-adenosylmethionine decarboxylase alpha chain" evidence="1">
    <location>
        <begin position="112"/>
        <end position="264"/>
    </location>
</feature>
<feature type="active site" description="Schiff-base intermediate with substrate; via pyruvic acid" evidence="1">
    <location>
        <position position="112"/>
    </location>
</feature>
<feature type="active site" description="Proton acceptor; for processing activity" evidence="1">
    <location>
        <position position="117"/>
    </location>
</feature>
<feature type="active site" description="Proton donor; for catalytic activity" evidence="1">
    <location>
        <position position="140"/>
    </location>
</feature>
<feature type="site" description="Cleavage (non-hydrolytic); by autolysis" evidence="1">
    <location>
        <begin position="111"/>
        <end position="112"/>
    </location>
</feature>
<feature type="modified residue" description="Pyruvic acid (Ser); by autocatalysis" evidence="1">
    <location>
        <position position="112"/>
    </location>
</feature>
<proteinExistence type="inferred from homology"/>
<accession>C4K3X2</accession>
<comment type="function">
    <text evidence="1">Catalyzes the decarboxylation of S-adenosylmethionine to S-adenosylmethioninamine (dcAdoMet), the propylamine donor required for the synthesis of the polyamines spermine and spermidine from the diamine putrescine.</text>
</comment>
<comment type="catalytic activity">
    <reaction evidence="1">
        <text>S-adenosyl-L-methionine + H(+) = S-adenosyl 3-(methylsulfanyl)propylamine + CO2</text>
        <dbReference type="Rhea" id="RHEA:15981"/>
        <dbReference type="ChEBI" id="CHEBI:15378"/>
        <dbReference type="ChEBI" id="CHEBI:16526"/>
        <dbReference type="ChEBI" id="CHEBI:57443"/>
        <dbReference type="ChEBI" id="CHEBI:59789"/>
        <dbReference type="EC" id="4.1.1.50"/>
    </reaction>
</comment>
<comment type="cofactor">
    <cofactor evidence="1">
        <name>pyruvate</name>
        <dbReference type="ChEBI" id="CHEBI:15361"/>
    </cofactor>
    <text evidence="1">Binds 1 pyruvoyl group covalently per subunit.</text>
</comment>
<comment type="pathway">
    <text evidence="1">Amine and polyamine biosynthesis; S-adenosylmethioninamine biosynthesis; S-adenosylmethioninamine from S-adenosyl-L-methionine: step 1/1.</text>
</comment>
<comment type="subunit">
    <text evidence="1">Heterooctamer of four alpha and four beta chains arranged as a tetramer of alpha/beta heterodimers.</text>
</comment>
<comment type="PTM">
    <text evidence="1">Is synthesized initially as an inactive proenzyme. Formation of the active enzyme involves a self-maturation process in which the active site pyruvoyl group is generated from an internal serine residue via an autocatalytic post-translational modification. Two non-identical subunits are generated from the proenzyme in this reaction, and the pyruvate is formed at the N-terminus of the alpha chain, which is derived from the carboxyl end of the proenzyme. The post-translation cleavage follows an unusual pathway, termed non-hydrolytic serinolysis, in which the side chain hydroxyl group of the serine supplies its oxygen atom to form the C-terminus of the beta chain, while the remainder of the serine residue undergoes an oxidative deamination to produce ammonia and the pyruvoyl group blocking the N-terminus of the alpha chain.</text>
</comment>
<comment type="similarity">
    <text evidence="1">Belongs to the prokaryotic AdoMetDC family. Type 2 subfamily.</text>
</comment>
<gene>
    <name evidence="1" type="primary">speD</name>
    <name type="ordered locus">HDEF_0511</name>
</gene>
<name>SPED_HAMD5</name>